<name>VLMC_LECSP</name>
<proteinExistence type="inferred from homology"/>
<sequence>MIFTQPSFVPALPSPLPLGETIGDFCMSERLAKVGNDAVEEQPIPFIDAAIDKSWTTDEINTRVAQLTRALATEWNIAPGEKWHKQVAVLASNCVSIFMDTLILTWAIHRLGGGCLMLQPTSSVEEMAAHIDHVPPFAMFVTLDLVTLGQETIQKSSQSADLPFYKFSKVYGPPAKNAPDTSNVKSLDALLEKSKDQAPIEKLLLAEGEGSKRVAYYCTTSGTGGFQRIVAITHENIIASILQAGLFTGITKEKSEIALVFTPFNHIYGLLTAHTLMWLGHSTVIHRGFNMLEVLMSIPKRRITTLYLVPPIINAMSRNASLLDRFDLSSVSSVIAGGGPLNKEDYAKMQTVRPNWKLLSGWGQTESCAVGSLAYPKDTVAGSSGVVLPGVRLRMRNDDGNLVQGLEEMGEIEMSSPSVLYEYIDNATEALITPHTEEYWRPTGDVGLIRECPSGIQHLFIVDRIRDMIKVKGHQVAPGEIEVHLMKHDAVGETAVVGIADAVAGERPLAFVIREPSYSPETSDAELRKILQDHNDSALPEIYRLQNRIIIVESIPKSANGKILKRELRKQVVGWTPPKE</sequence>
<keyword id="KW-0067">ATP-binding</keyword>
<keyword id="KW-0436">Ligase</keyword>
<keyword id="KW-0547">Nucleotide-binding</keyword>
<keyword id="KW-0843">Virulence</keyword>
<gene>
    <name evidence="3" type="primary">vlmC</name>
</gene>
<accession>A0A024F9J0</accession>
<organism>
    <name type="scientific">Lecanicillium sp</name>
    <dbReference type="NCBI Taxonomy" id="1756136"/>
    <lineage>
        <taxon>Eukaryota</taxon>
        <taxon>Fungi</taxon>
        <taxon>Dikarya</taxon>
        <taxon>Ascomycota</taxon>
        <taxon>Pezizomycotina</taxon>
        <taxon>Sordariomycetes</taxon>
        <taxon>Hypocreomycetidae</taxon>
        <taxon>Hypocreales</taxon>
        <taxon>Cordycipitaceae</taxon>
        <taxon>Lecanicillium</taxon>
    </lineage>
</organism>
<dbReference type="EC" id="6.3.2.-" evidence="5"/>
<dbReference type="EMBL" id="AB862315">
    <property type="protein sequence ID" value="BAO73255.1"/>
    <property type="molecule type" value="Genomic_DNA"/>
</dbReference>
<dbReference type="SMR" id="A0A024F9J0"/>
<dbReference type="GO" id="GO:0005524">
    <property type="term" value="F:ATP binding"/>
    <property type="evidence" value="ECO:0007669"/>
    <property type="project" value="UniProtKB-KW"/>
</dbReference>
<dbReference type="GO" id="GO:0016405">
    <property type="term" value="F:CoA-ligase activity"/>
    <property type="evidence" value="ECO:0007669"/>
    <property type="project" value="TreeGrafter"/>
</dbReference>
<dbReference type="CDD" id="cd05911">
    <property type="entry name" value="Firefly_Luc_like"/>
    <property type="match status" value="1"/>
</dbReference>
<dbReference type="Gene3D" id="3.30.300.30">
    <property type="match status" value="1"/>
</dbReference>
<dbReference type="Gene3D" id="3.40.50.12780">
    <property type="entry name" value="N-terminal domain of ligase-like"/>
    <property type="match status" value="1"/>
</dbReference>
<dbReference type="InterPro" id="IPR025110">
    <property type="entry name" value="AMP-bd_C"/>
</dbReference>
<dbReference type="InterPro" id="IPR045851">
    <property type="entry name" value="AMP-bd_C_sf"/>
</dbReference>
<dbReference type="InterPro" id="IPR000873">
    <property type="entry name" value="AMP-dep_synth/lig_dom"/>
</dbReference>
<dbReference type="InterPro" id="IPR042099">
    <property type="entry name" value="ANL_N_sf"/>
</dbReference>
<dbReference type="PANTHER" id="PTHR24096:SF422">
    <property type="entry name" value="BCDNA.GH02901"/>
    <property type="match status" value="1"/>
</dbReference>
<dbReference type="PANTHER" id="PTHR24096">
    <property type="entry name" value="LONG-CHAIN-FATTY-ACID--COA LIGASE"/>
    <property type="match status" value="1"/>
</dbReference>
<dbReference type="Pfam" id="PF00501">
    <property type="entry name" value="AMP-binding"/>
    <property type="match status" value="1"/>
</dbReference>
<dbReference type="Pfam" id="PF13193">
    <property type="entry name" value="AMP-binding_C"/>
    <property type="match status" value="1"/>
</dbReference>
<dbReference type="SUPFAM" id="SSF56801">
    <property type="entry name" value="Acetyl-CoA synthetase-like"/>
    <property type="match status" value="1"/>
</dbReference>
<comment type="function">
    <text evidence="2">AMP-dependent ligase; part of the gene cluster that mediates the biosynthesis of verlamelin, a lipopeptide that exhibits antifungal activity against plant pathogenic fungi (PubMed:24848421). Verlamelin is a cyclic hexadepsipeptide and is bridged by ester bonding between a 5-hydroxytetradecanoic acid moiety and a carboxyl group on the terminal Val of amide-bonded tetradecanoyl-hexapeptide D-allo-Thr-D-Ala-L-Pro-L-Gln-D-Tyr-L-Val (PubMed:24848421). VlmA and vlmB are altogether regarded as essential components in the biosynthesis of 5-hydroxytetradecanoic acid (PubMed:24848421). VlmA catalyzes the hydroxylation at position C5 of tetradecanoic acid produced in primary metabolism, while the precise function of vlmB still remains to be solved (PubMed:24848421). To be loaded onto the waiting NRPS, 5-hydroxytetradecanoic acid is activated in the form of acyladenylate by the AMP-dependent ligase vlmC (PubMed:24848421). VlmS seems to accept the fatty-acyl intermediate onto the initial module to further elongate amino acid residues by the downstream modules (PubMed:24848421). In addition, in the last module at its C-terminus, vlmS contains a surplus condensation (C) domain that may be involved in cyclization, the last step to form verlamelin (PubMed:24848421).</text>
</comment>
<comment type="pathway">
    <text evidence="2">Secondary metabolite biosynthesis.</text>
</comment>
<comment type="disruption phenotype">
    <text evidence="2">Leads to complete loss of verlamelin production (PubMed:24848421).</text>
</comment>
<comment type="similarity">
    <text evidence="4">Belongs to the ATP-dependent AMP-binding enzyme family.</text>
</comment>
<protein>
    <recommendedName>
        <fullName evidence="3">AMP-dependent ligase vlmC</fullName>
        <ecNumber evidence="5">6.3.2.-</ecNumber>
    </recommendedName>
    <alternativeName>
        <fullName evidence="3">Verlamelin biosynthesis protein C</fullName>
    </alternativeName>
</protein>
<feature type="chain" id="PRO_0000438580" description="AMP-dependent ligase vlmC">
    <location>
        <begin position="1"/>
        <end position="580"/>
    </location>
</feature>
<feature type="binding site" evidence="1">
    <location>
        <begin position="264"/>
        <end position="265"/>
    </location>
    <ligand>
        <name>substrate</name>
    </ligand>
</feature>
<feature type="binding site" evidence="1">
    <location>
        <position position="338"/>
    </location>
    <ligand>
        <name>ATP</name>
        <dbReference type="ChEBI" id="CHEBI:30616"/>
    </ligand>
</feature>
<feature type="binding site" evidence="1">
    <location>
        <position position="464"/>
    </location>
    <ligand>
        <name>ATP</name>
        <dbReference type="ChEBI" id="CHEBI:30616"/>
    </ligand>
</feature>
<feature type="binding site" evidence="1">
    <location>
        <position position="562"/>
    </location>
    <ligand>
        <name>ATP</name>
        <dbReference type="ChEBI" id="CHEBI:30616"/>
    </ligand>
</feature>
<feature type="binding site" evidence="1">
    <location>
        <position position="562"/>
    </location>
    <ligand>
        <name>substrate</name>
    </ligand>
</feature>
<reference key="1">
    <citation type="journal article" date="2014" name="Appl. Microbiol. Biotechnol.">
        <title>Identification of a gene cluster responsible for the biosynthesis of cyclic lipopeptide verlamelin.</title>
        <authorList>
            <person name="Ishidoh K."/>
            <person name="Kinoshita H."/>
            <person name="Nihira T."/>
        </authorList>
    </citation>
    <scope>NUCLEOTIDE SEQUENCE [GENOMIC DNA]</scope>
    <scope>FUNCTION</scope>
    <scope>DISRUPTION PHENOTYPE</scope>
    <scope>PATHWAY</scope>
    <source>
        <strain>HF627</strain>
    </source>
</reference>
<evidence type="ECO:0000250" key="1">
    <source>
        <dbReference type="UniProtKB" id="P40871"/>
    </source>
</evidence>
<evidence type="ECO:0000269" key="2">
    <source>
    </source>
</evidence>
<evidence type="ECO:0000303" key="3">
    <source>
    </source>
</evidence>
<evidence type="ECO:0000305" key="4"/>
<evidence type="ECO:0000305" key="5">
    <source>
    </source>
</evidence>